<organism>
    <name type="scientific">Homo sapiens</name>
    <name type="common">Human</name>
    <dbReference type="NCBI Taxonomy" id="9606"/>
    <lineage>
        <taxon>Eukaryota</taxon>
        <taxon>Metazoa</taxon>
        <taxon>Chordata</taxon>
        <taxon>Craniata</taxon>
        <taxon>Vertebrata</taxon>
        <taxon>Euteleostomi</taxon>
        <taxon>Mammalia</taxon>
        <taxon>Eutheria</taxon>
        <taxon>Euarchontoglires</taxon>
        <taxon>Primates</taxon>
        <taxon>Haplorrhini</taxon>
        <taxon>Catarrhini</taxon>
        <taxon>Hominidae</taxon>
        <taxon>Homo</taxon>
    </lineage>
</organism>
<dbReference type="EMBL" id="L06155">
    <property type="protein sequence ID" value="AAC13541.1"/>
    <property type="status" value="ALT_INIT"/>
    <property type="molecule type" value="Genomic_DNA"/>
</dbReference>
<dbReference type="EMBL" id="AY227893">
    <property type="protein sequence ID" value="AAO72726.1"/>
    <property type="status" value="ALT_INIT"/>
    <property type="molecule type" value="mRNA"/>
</dbReference>
<dbReference type="EMBL" id="AL139824">
    <property type="status" value="NOT_ANNOTATED_CDS"/>
    <property type="molecule type" value="Genomic_DNA"/>
</dbReference>
<dbReference type="EMBL" id="BC069105">
    <property type="protein sequence ID" value="AAH69105.1"/>
    <property type="status" value="ALT_INIT"/>
    <property type="molecule type" value="mRNA"/>
</dbReference>
<dbReference type="EMBL" id="BC069599">
    <property type="protein sequence ID" value="AAH69599.1"/>
    <property type="status" value="ALT_INIT"/>
    <property type="molecule type" value="mRNA"/>
</dbReference>
<dbReference type="EMBL" id="BC096702">
    <property type="protein sequence ID" value="AAH96702.1"/>
    <property type="status" value="ALT_INIT"/>
    <property type="molecule type" value="mRNA"/>
</dbReference>
<dbReference type="EMBL" id="BC096737">
    <property type="protein sequence ID" value="AAH96737.1"/>
    <property type="status" value="ALT_INIT"/>
    <property type="molecule type" value="mRNA"/>
</dbReference>
<dbReference type="EMBL" id="BC098169">
    <property type="protein sequence ID" value="AAH98169.1"/>
    <property type="status" value="ALT_INIT"/>
    <property type="molecule type" value="mRNA"/>
</dbReference>
<dbReference type="EMBL" id="BC098351">
    <property type="protein sequence ID" value="AAH98351.1"/>
    <property type="status" value="ALT_INIT"/>
    <property type="molecule type" value="mRNA"/>
</dbReference>
<dbReference type="CCDS" id="CCDS13449.2"/>
<dbReference type="PIR" id="B46647">
    <property type="entry name" value="B46647"/>
</dbReference>
<dbReference type="RefSeq" id="NP_063941.3">
    <property type="nucleotide sequence ID" value="NM_019888.3"/>
</dbReference>
<dbReference type="PDB" id="8IOC">
    <property type="method" value="EM"/>
    <property type="resolution" value="2.86 A"/>
    <property type="chains" value="R=2-323"/>
</dbReference>
<dbReference type="PDB" id="8KIG">
    <property type="method" value="EM"/>
    <property type="resolution" value="3.10 A"/>
    <property type="chains" value="R=2-214, R=236-323"/>
</dbReference>
<dbReference type="PDBsum" id="8IOC"/>
<dbReference type="PDBsum" id="8KIG"/>
<dbReference type="EMDB" id="EMD-35615"/>
<dbReference type="SMR" id="P41968"/>
<dbReference type="BioGRID" id="110329">
    <property type="interactions" value="3"/>
</dbReference>
<dbReference type="CORUM" id="P41968"/>
<dbReference type="DIP" id="DIP-48790N"/>
<dbReference type="FunCoup" id="P41968">
    <property type="interactions" value="909"/>
</dbReference>
<dbReference type="IntAct" id="P41968">
    <property type="interactions" value="3"/>
</dbReference>
<dbReference type="MINT" id="P41968"/>
<dbReference type="STRING" id="9606.ENSP00000243911"/>
<dbReference type="BindingDB" id="P41968"/>
<dbReference type="ChEMBL" id="CHEMBL4644"/>
<dbReference type="DrugBank" id="DB11653">
    <property type="generic name" value="Bremelanotide"/>
</dbReference>
<dbReference type="DrugCentral" id="P41968"/>
<dbReference type="GuidetoPHARMACOLOGY" id="284"/>
<dbReference type="GlyCosmos" id="P41968">
    <property type="glycosylation" value="3 sites, No reported glycans"/>
</dbReference>
<dbReference type="GlyGen" id="P41968">
    <property type="glycosylation" value="3 sites"/>
</dbReference>
<dbReference type="BioMuta" id="MC3R"/>
<dbReference type="DMDM" id="395398606"/>
<dbReference type="PaxDb" id="9606-ENSP00000243911"/>
<dbReference type="Antibodypedia" id="2935">
    <property type="antibodies" value="348 antibodies from 37 providers"/>
</dbReference>
<dbReference type="DNASU" id="4159"/>
<dbReference type="Ensembl" id="ENST00000243911.2">
    <property type="protein sequence ID" value="ENSP00000243911.2"/>
    <property type="gene ID" value="ENSG00000124089.4"/>
</dbReference>
<dbReference type="GeneID" id="4159"/>
<dbReference type="KEGG" id="hsa:4159"/>
<dbReference type="MANE-Select" id="ENST00000243911.2">
    <property type="protein sequence ID" value="ENSP00000243911.2"/>
    <property type="RefSeq nucleotide sequence ID" value="NM_019888.3"/>
    <property type="RefSeq protein sequence ID" value="NP_063941.3"/>
</dbReference>
<dbReference type="UCSC" id="uc002xxb.2">
    <property type="organism name" value="human"/>
</dbReference>
<dbReference type="AGR" id="HGNC:6931"/>
<dbReference type="CTD" id="4159"/>
<dbReference type="DisGeNET" id="4159"/>
<dbReference type="GeneCards" id="MC3R"/>
<dbReference type="HGNC" id="HGNC:6931">
    <property type="gene designation" value="MC3R"/>
</dbReference>
<dbReference type="HPA" id="ENSG00000124089">
    <property type="expression patterns" value="Tissue enriched (brain)"/>
</dbReference>
<dbReference type="MalaCards" id="MC3R"/>
<dbReference type="MIM" id="155540">
    <property type="type" value="gene"/>
</dbReference>
<dbReference type="MIM" id="602025">
    <property type="type" value="phenotype"/>
</dbReference>
<dbReference type="neXtProt" id="NX_P41968"/>
<dbReference type="OpenTargets" id="ENSG00000124089"/>
<dbReference type="PharmGKB" id="PA30675"/>
<dbReference type="VEuPathDB" id="HostDB:ENSG00000124089"/>
<dbReference type="eggNOG" id="KOG3656">
    <property type="taxonomic scope" value="Eukaryota"/>
</dbReference>
<dbReference type="GeneTree" id="ENSGT01120000271819"/>
<dbReference type="HOGENOM" id="CLU_009579_13_0_1"/>
<dbReference type="InParanoid" id="P41968"/>
<dbReference type="OMA" id="KEIVCCC"/>
<dbReference type="OrthoDB" id="5970330at2759"/>
<dbReference type="PAN-GO" id="P41968">
    <property type="GO annotations" value="6 GO annotations based on evolutionary models"/>
</dbReference>
<dbReference type="PhylomeDB" id="P41968"/>
<dbReference type="TreeFam" id="TF332646"/>
<dbReference type="PathwayCommons" id="P41968"/>
<dbReference type="Reactome" id="R-HSA-375276">
    <property type="pathway name" value="Peptide ligand-binding receptors"/>
</dbReference>
<dbReference type="Reactome" id="R-HSA-418555">
    <property type="pathway name" value="G alpha (s) signalling events"/>
</dbReference>
<dbReference type="Reactome" id="R-HSA-9856649">
    <property type="pathway name" value="Transcriptional and post-translational regulation of MITF-M expression and activity"/>
</dbReference>
<dbReference type="SignaLink" id="P41968"/>
<dbReference type="SIGNOR" id="P41968"/>
<dbReference type="BioGRID-ORCS" id="4159">
    <property type="hits" value="10 hits in 1138 CRISPR screens"/>
</dbReference>
<dbReference type="GeneWiki" id="Melanocortin_3_receptor"/>
<dbReference type="GenomeRNAi" id="4159"/>
<dbReference type="Pharos" id="P41968">
    <property type="development level" value="Tchem"/>
</dbReference>
<dbReference type="PRO" id="PR:P41968"/>
<dbReference type="Proteomes" id="UP000005640">
    <property type="component" value="Chromosome 20"/>
</dbReference>
<dbReference type="RNAct" id="P41968">
    <property type="molecule type" value="protein"/>
</dbReference>
<dbReference type="Bgee" id="ENSG00000124089">
    <property type="expression patterns" value="Expressed in deltoid and 11 other cell types or tissues"/>
</dbReference>
<dbReference type="GO" id="GO:0005737">
    <property type="term" value="C:cytoplasm"/>
    <property type="evidence" value="ECO:0000318"/>
    <property type="project" value="GO_Central"/>
</dbReference>
<dbReference type="GO" id="GO:0005886">
    <property type="term" value="C:plasma membrane"/>
    <property type="evidence" value="ECO:0000318"/>
    <property type="project" value="GO_Central"/>
</dbReference>
<dbReference type="GO" id="GO:0004977">
    <property type="term" value="F:melanocortin receptor activity"/>
    <property type="evidence" value="ECO:0000304"/>
    <property type="project" value="ProtInc"/>
</dbReference>
<dbReference type="GO" id="GO:0004980">
    <property type="term" value="F:melanocyte-stimulating hormone receptor activity"/>
    <property type="evidence" value="ECO:0000353"/>
    <property type="project" value="BHF-UCL"/>
</dbReference>
<dbReference type="GO" id="GO:0042923">
    <property type="term" value="F:neuropeptide binding"/>
    <property type="evidence" value="ECO:0000315"/>
    <property type="project" value="UniProtKB"/>
</dbReference>
<dbReference type="GO" id="GO:0017046">
    <property type="term" value="F:peptide hormone binding"/>
    <property type="evidence" value="ECO:0000318"/>
    <property type="project" value="GO_Central"/>
</dbReference>
<dbReference type="GO" id="GO:0007189">
    <property type="term" value="P:adenylate cyclase-activating G protein-coupled receptor signaling pathway"/>
    <property type="evidence" value="ECO:0000314"/>
    <property type="project" value="BHF-UCL"/>
</dbReference>
<dbReference type="GO" id="GO:0032922">
    <property type="term" value="P:circadian regulation of gene expression"/>
    <property type="evidence" value="ECO:0000250"/>
    <property type="project" value="UniProtKB"/>
</dbReference>
<dbReference type="GO" id="GO:0007187">
    <property type="term" value="P:G protein-coupled receptor signaling pathway, coupled to cyclic nucleotide second messenger"/>
    <property type="evidence" value="ECO:0000304"/>
    <property type="project" value="ProtInc"/>
</dbReference>
<dbReference type="GO" id="GO:0042309">
    <property type="term" value="P:homoiothermy"/>
    <property type="evidence" value="ECO:0007669"/>
    <property type="project" value="Ensembl"/>
</dbReference>
<dbReference type="GO" id="GO:0045475">
    <property type="term" value="P:locomotor rhythm"/>
    <property type="evidence" value="ECO:0007669"/>
    <property type="project" value="Ensembl"/>
</dbReference>
<dbReference type="GO" id="GO:0007200">
    <property type="term" value="P:phospholipase C-activating G protein-coupled receptor signaling pathway"/>
    <property type="evidence" value="ECO:0000304"/>
    <property type="project" value="ProtInc"/>
</dbReference>
<dbReference type="GO" id="GO:0008217">
    <property type="term" value="P:regulation of blood pressure"/>
    <property type="evidence" value="ECO:0007669"/>
    <property type="project" value="Ensembl"/>
</dbReference>
<dbReference type="GO" id="GO:0060259">
    <property type="term" value="P:regulation of feeding behavior"/>
    <property type="evidence" value="ECO:0007669"/>
    <property type="project" value="Ensembl"/>
</dbReference>
<dbReference type="GO" id="GO:0002027">
    <property type="term" value="P:regulation of heart rate"/>
    <property type="evidence" value="ECO:0007669"/>
    <property type="project" value="Ensembl"/>
</dbReference>
<dbReference type="GO" id="GO:0019222">
    <property type="term" value="P:regulation of metabolic process"/>
    <property type="evidence" value="ECO:0000318"/>
    <property type="project" value="GO_Central"/>
</dbReference>
<dbReference type="GO" id="GO:0055078">
    <property type="term" value="P:sodium ion homeostasis"/>
    <property type="evidence" value="ECO:0007669"/>
    <property type="project" value="Ensembl"/>
</dbReference>
<dbReference type="CDD" id="cd15352">
    <property type="entry name" value="7tmA_MC3R"/>
    <property type="match status" value="1"/>
</dbReference>
<dbReference type="FunFam" id="1.20.1070.10:FF:000077">
    <property type="entry name" value="Melanocortin receptor 4"/>
    <property type="match status" value="1"/>
</dbReference>
<dbReference type="Gene3D" id="1.20.1070.10">
    <property type="entry name" value="Rhodopsin 7-helix transmembrane proteins"/>
    <property type="match status" value="1"/>
</dbReference>
<dbReference type="InterPro" id="IPR000276">
    <property type="entry name" value="GPCR_Rhodpsn"/>
</dbReference>
<dbReference type="InterPro" id="IPR017452">
    <property type="entry name" value="GPCR_Rhodpsn_7TM"/>
</dbReference>
<dbReference type="InterPro" id="IPR001908">
    <property type="entry name" value="MC3-5R"/>
</dbReference>
<dbReference type="InterPro" id="IPR002122">
    <property type="entry name" value="Mcort_3_rcpt"/>
</dbReference>
<dbReference type="InterPro" id="IPR001671">
    <property type="entry name" value="Melcrt_ACTH_rcpt"/>
</dbReference>
<dbReference type="PANTHER" id="PTHR22750">
    <property type="entry name" value="G-PROTEIN COUPLED RECEPTOR"/>
    <property type="match status" value="1"/>
</dbReference>
<dbReference type="Pfam" id="PF00001">
    <property type="entry name" value="7tm_1"/>
    <property type="match status" value="1"/>
</dbReference>
<dbReference type="PRINTS" id="PR00237">
    <property type="entry name" value="GPCRRHODOPSN"/>
</dbReference>
<dbReference type="PRINTS" id="PR00534">
    <property type="entry name" value="MCRFAMILY"/>
</dbReference>
<dbReference type="PRINTS" id="PR00535">
    <property type="entry name" value="MELNOCORTINR"/>
</dbReference>
<dbReference type="PRINTS" id="PR01061">
    <property type="entry name" value="MELNOCORTN3R"/>
</dbReference>
<dbReference type="SMART" id="SM01381">
    <property type="entry name" value="7TM_GPCR_Srsx"/>
    <property type="match status" value="1"/>
</dbReference>
<dbReference type="SUPFAM" id="SSF81321">
    <property type="entry name" value="Family A G protein-coupled receptor-like"/>
    <property type="match status" value="1"/>
</dbReference>
<dbReference type="PROSITE" id="PS00237">
    <property type="entry name" value="G_PROTEIN_RECEP_F1_1"/>
    <property type="match status" value="1"/>
</dbReference>
<dbReference type="PROSITE" id="PS50262">
    <property type="entry name" value="G_PROTEIN_RECEP_F1_2"/>
    <property type="match status" value="1"/>
</dbReference>
<sequence length="323" mass="36043">MNASCCLPSVQPTLPNGSEHLQAPFFSNQSSSAFCEQVFIKPEVFLSLGIVSLLENILVILAVVRNGNLHSPMYFFLCSLAVADMLVSVSNALETIMIAIVHSDYLTFEDQFIQHMDNIFDSMICISLVASICNLLAIAVDRYVTIFYALRYHSIMTVRKALTLIVAIWVCCGVCGVVFIVYSESKMVIVCLITMFFAMMLLMGTLYVHMFLFARLHVKRIAALPPADGVAPQQHSCMKGAVTITILLGVFIFCWAPFFLHLVLIITCPTNPYCICYTAHFNTYLVLIMCNSVIDPLIYAFRSLELRNTFREILCGCNGMNLG</sequence>
<gene>
    <name type="primary">MC3R</name>
</gene>
<comment type="function">
    <text evidence="1">Receptor for MSH (alpha, beta and gamma) and ACTH. This receptor is mediated by G proteins which activate adenylate cyclase. Required for expression of anticipatory patterns of activity and wakefulness during periods of limited nutrient availability and for the normal regulation of circadian clock activity in the brain.</text>
</comment>
<comment type="interaction">
    <interactant intactId="EBI-9538510">
        <id>P41968</id>
    </interactant>
    <interactant intactId="EBI-9538727">
        <id>Q8TCY5</id>
        <label>MRAP</label>
    </interactant>
    <organismsDiffer>false</organismsDiffer>
    <experiments>2</experiments>
</comment>
<comment type="subcellular location">
    <subcellularLocation>
        <location>Cell membrane</location>
        <topology>Multi-pass membrane protein</topology>
    </subcellularLocation>
</comment>
<comment type="tissue specificity">
    <text>Brain, placental, and gut tissues.</text>
</comment>
<comment type="polymorphism">
    <text evidence="4 6">Genetic variations in MC3R define the body mass index quantitative trait locus 9 (BMIQ9) [MIM:602025]. Variance in body mass index is a susceptibility factor for obesity.</text>
</comment>
<comment type="similarity">
    <text evidence="3">Belongs to the G-protein coupled receptor 1 family.</text>
</comment>
<comment type="sequence caution" evidence="8">
    <conflict type="erroneous initiation">
        <sequence resource="EMBL-CDS" id="AAC13541"/>
    </conflict>
    <text>Extended N-terminus.</text>
</comment>
<comment type="sequence caution" evidence="8">
    <conflict type="erroneous initiation">
        <sequence resource="EMBL-CDS" id="AAH69105"/>
    </conflict>
    <text>Extended N-terminus.</text>
</comment>
<comment type="sequence caution" evidence="8">
    <conflict type="erroneous initiation">
        <sequence resource="EMBL-CDS" id="AAH69599"/>
    </conflict>
    <text>Extended N-terminus.</text>
</comment>
<comment type="sequence caution" evidence="8">
    <conflict type="erroneous initiation">
        <sequence resource="EMBL-CDS" id="AAH96702"/>
    </conflict>
    <text>Extended N-terminus.</text>
</comment>
<comment type="sequence caution" evidence="8">
    <conflict type="erroneous initiation">
        <sequence resource="EMBL-CDS" id="AAH96737"/>
    </conflict>
    <text>Extended N-terminus.</text>
</comment>
<comment type="sequence caution" evidence="8">
    <conflict type="erroneous initiation">
        <sequence resource="EMBL-CDS" id="AAH98169"/>
    </conflict>
    <text>Extended N-terminus.</text>
</comment>
<comment type="sequence caution" evidence="8">
    <conflict type="erroneous initiation">
        <sequence resource="EMBL-CDS" id="AAH98351"/>
    </conflict>
    <text>Extended N-terminus.</text>
</comment>
<comment type="sequence caution" evidence="8">
    <conflict type="erroneous initiation">
        <sequence resource="EMBL-CDS" id="AAO72726"/>
    </conflict>
    <text>Extended N-terminus.</text>
</comment>
<evidence type="ECO:0000250" key="1">
    <source>
        <dbReference type="UniProtKB" id="P33033"/>
    </source>
</evidence>
<evidence type="ECO:0000255" key="2"/>
<evidence type="ECO:0000255" key="3">
    <source>
        <dbReference type="PROSITE-ProRule" id="PRU00521"/>
    </source>
</evidence>
<evidence type="ECO:0000269" key="4">
    <source>
    </source>
</evidence>
<evidence type="ECO:0000269" key="5">
    <source>
    </source>
</evidence>
<evidence type="ECO:0000269" key="6">
    <source>
    </source>
</evidence>
<evidence type="ECO:0000269" key="7">
    <source>
    </source>
</evidence>
<evidence type="ECO:0000305" key="8"/>
<evidence type="ECO:0007829" key="9">
    <source>
        <dbReference type="PDB" id="8IOC"/>
    </source>
</evidence>
<keyword id="KW-0002">3D-structure</keyword>
<keyword id="KW-0090">Biological rhythms</keyword>
<keyword id="KW-1003">Cell membrane</keyword>
<keyword id="KW-0297">G-protein coupled receptor</keyword>
<keyword id="KW-0325">Glycoprotein</keyword>
<keyword id="KW-0449">Lipoprotein</keyword>
<keyword id="KW-0472">Membrane</keyword>
<keyword id="KW-0564">Palmitate</keyword>
<keyword id="KW-0675">Receptor</keyword>
<keyword id="KW-1185">Reference proteome</keyword>
<keyword id="KW-0807">Transducer</keyword>
<keyword id="KW-0812">Transmembrane</keyword>
<keyword id="KW-1133">Transmembrane helix</keyword>
<reference key="1">
    <citation type="journal article" date="1993" name="J. Biol. Chem.">
        <title>Molecular cloning of a novel melanocortin receptor.</title>
        <authorList>
            <person name="Gantz I."/>
            <person name="Konda Y."/>
            <person name="Tashiro T."/>
            <person name="Shimoto Y."/>
            <person name="Miwa H."/>
            <person name="Munzert G."/>
            <person name="Watson S.J."/>
            <person name="Delvalle J."/>
            <person name="Yamada T."/>
        </authorList>
    </citation>
    <scope>NUCLEOTIDE SEQUENCE [GENOMIC DNA]</scope>
    <scope>VARIANT ILE-44</scope>
</reference>
<reference key="2">
    <citation type="submission" date="2003-01" db="EMBL/GenBank/DDBJ databases">
        <title>cDNA clones of human proteins involved in signal transduction sequenced by the Guthrie cDNA resource center (www.cdna.org).</title>
        <authorList>
            <person name="Kopatz S.A."/>
            <person name="Aronstam R.S."/>
            <person name="Sharma S.V."/>
        </authorList>
    </citation>
    <scope>NUCLEOTIDE SEQUENCE [LARGE SCALE MRNA]</scope>
</reference>
<reference key="3">
    <citation type="journal article" date="2001" name="Nature">
        <title>The DNA sequence and comparative analysis of human chromosome 20.</title>
        <authorList>
            <person name="Deloukas P."/>
            <person name="Matthews L.H."/>
            <person name="Ashurst J.L."/>
            <person name="Burton J."/>
            <person name="Gilbert J.G.R."/>
            <person name="Jones M."/>
            <person name="Stavrides G."/>
            <person name="Almeida J.P."/>
            <person name="Babbage A.K."/>
            <person name="Bagguley C.L."/>
            <person name="Bailey J."/>
            <person name="Barlow K.F."/>
            <person name="Bates K.N."/>
            <person name="Beard L.M."/>
            <person name="Beare D.M."/>
            <person name="Beasley O.P."/>
            <person name="Bird C.P."/>
            <person name="Blakey S.E."/>
            <person name="Bridgeman A.M."/>
            <person name="Brown A.J."/>
            <person name="Buck D."/>
            <person name="Burrill W.D."/>
            <person name="Butler A.P."/>
            <person name="Carder C."/>
            <person name="Carter N.P."/>
            <person name="Chapman J.C."/>
            <person name="Clamp M."/>
            <person name="Clark G."/>
            <person name="Clark L.N."/>
            <person name="Clark S.Y."/>
            <person name="Clee C.M."/>
            <person name="Clegg S."/>
            <person name="Cobley V.E."/>
            <person name="Collier R.E."/>
            <person name="Connor R.E."/>
            <person name="Corby N.R."/>
            <person name="Coulson A."/>
            <person name="Coville G.J."/>
            <person name="Deadman R."/>
            <person name="Dhami P.D."/>
            <person name="Dunn M."/>
            <person name="Ellington A.G."/>
            <person name="Frankland J.A."/>
            <person name="Fraser A."/>
            <person name="French L."/>
            <person name="Garner P."/>
            <person name="Grafham D.V."/>
            <person name="Griffiths C."/>
            <person name="Griffiths M.N.D."/>
            <person name="Gwilliam R."/>
            <person name="Hall R.E."/>
            <person name="Hammond S."/>
            <person name="Harley J.L."/>
            <person name="Heath P.D."/>
            <person name="Ho S."/>
            <person name="Holden J.L."/>
            <person name="Howden P.J."/>
            <person name="Huckle E."/>
            <person name="Hunt A.R."/>
            <person name="Hunt S.E."/>
            <person name="Jekosch K."/>
            <person name="Johnson C.M."/>
            <person name="Johnson D."/>
            <person name="Kay M.P."/>
            <person name="Kimberley A.M."/>
            <person name="King A."/>
            <person name="Knights A."/>
            <person name="Laird G.K."/>
            <person name="Lawlor S."/>
            <person name="Lehvaeslaiho M.H."/>
            <person name="Leversha M.A."/>
            <person name="Lloyd C."/>
            <person name="Lloyd D.M."/>
            <person name="Lovell J.D."/>
            <person name="Marsh V.L."/>
            <person name="Martin S.L."/>
            <person name="McConnachie L.J."/>
            <person name="McLay K."/>
            <person name="McMurray A.A."/>
            <person name="Milne S.A."/>
            <person name="Mistry D."/>
            <person name="Moore M.J.F."/>
            <person name="Mullikin J.C."/>
            <person name="Nickerson T."/>
            <person name="Oliver K."/>
            <person name="Parker A."/>
            <person name="Patel R."/>
            <person name="Pearce T.A.V."/>
            <person name="Peck A.I."/>
            <person name="Phillimore B.J.C.T."/>
            <person name="Prathalingam S.R."/>
            <person name="Plumb R.W."/>
            <person name="Ramsay H."/>
            <person name="Rice C.M."/>
            <person name="Ross M.T."/>
            <person name="Scott C.E."/>
            <person name="Sehra H.K."/>
            <person name="Shownkeen R."/>
            <person name="Sims S."/>
            <person name="Skuce C.D."/>
            <person name="Smith M.L."/>
            <person name="Soderlund C."/>
            <person name="Steward C.A."/>
            <person name="Sulston J.E."/>
            <person name="Swann R.M."/>
            <person name="Sycamore N."/>
            <person name="Taylor R."/>
            <person name="Tee L."/>
            <person name="Thomas D.W."/>
            <person name="Thorpe A."/>
            <person name="Tracey A."/>
            <person name="Tromans A.C."/>
            <person name="Vaudin M."/>
            <person name="Wall M."/>
            <person name="Wallis J.M."/>
            <person name="Whitehead S.L."/>
            <person name="Whittaker P."/>
            <person name="Willey D.L."/>
            <person name="Williams L."/>
            <person name="Williams S.A."/>
            <person name="Wilming L."/>
            <person name="Wray P.W."/>
            <person name="Hubbard T."/>
            <person name="Durbin R.M."/>
            <person name="Bentley D.R."/>
            <person name="Beck S."/>
            <person name="Rogers J."/>
        </authorList>
    </citation>
    <scope>NUCLEOTIDE SEQUENCE [LARGE SCALE GENOMIC DNA]</scope>
</reference>
<reference key="4">
    <citation type="journal article" date="2004" name="Genome Res.">
        <title>The status, quality, and expansion of the NIH full-length cDNA project: the Mammalian Gene Collection (MGC).</title>
        <authorList>
            <consortium name="The MGC Project Team"/>
        </authorList>
    </citation>
    <scope>NUCLEOTIDE SEQUENCE [LARGE SCALE MRNA]</scope>
</reference>
<reference key="5">
    <citation type="journal article" date="2012" name="Obes. Facts">
        <title>Identification of the translation start site of the human melanocortin 3 receptor.</title>
        <authorList>
            <person name="Tarnow P."/>
            <person name="Rediger A."/>
            <person name="Schulz A."/>
            <person name="Gruters A."/>
            <person name="Biebermann H."/>
        </authorList>
    </citation>
    <scope>TRANSLATIONAL START SITE</scope>
</reference>
<reference key="6">
    <citation type="journal article" date="2002" name="J. Clin. Endocrinol. Metab.">
        <title>A novel melanocortin 3 receptor gene (MC3R) mutation associated with severe obesity.</title>
        <authorList>
            <person name="Lee Y.-S."/>
            <person name="Poh L.K.-S."/>
            <person name="Loke K.-Y."/>
        </authorList>
    </citation>
    <scope>VARIANT ASN-146</scope>
    <scope>ASSOCIATION WITH SUSCEPTIBILITY TO OBESITY</scope>
</reference>
<reference key="7">
    <citation type="journal article" date="2004" name="J. Clin. Endocrinol. Metab.">
        <title>Functional characterization of melanocortin-3 receptor variants identify a loss-of-function mutation involving an amino acid critical for G protein-coupled receptor activation.</title>
        <authorList>
            <person name="Tao Y.-X."/>
            <person name="Segaloff D.L."/>
        </authorList>
    </citation>
    <scope>CHARACTERIZATION OF VARIANTS ILE-44 AND ASN-146</scope>
</reference>
<reference key="8">
    <citation type="journal article" date="2008" name="Eur. J. Hum. Genet.">
        <title>Sporadic mutations in melanocortin receptor 3 in morbid obese individuals.</title>
        <authorList>
            <person name="Mencarelli M."/>
            <person name="Walker G.E."/>
            <person name="Maestrini S."/>
            <person name="Alberti L."/>
            <person name="Verti B."/>
            <person name="Brunani A."/>
            <person name="Petroni M.L."/>
            <person name="Tagliaferri M."/>
            <person name="Liuzzi A."/>
            <person name="Di Blasio A.M."/>
        </authorList>
    </citation>
    <scope>VARIANT SER-298</scope>
    <scope>CHARACTERIZATION OF VARIANT SER-298</scope>
    <scope>ASSOCIATION WITH SUSCEPTIBILITY TO OBESITY</scope>
</reference>
<feature type="chain" id="PRO_0000069718" description="Melanocortin receptor 3">
    <location>
        <begin position="1"/>
        <end position="323"/>
    </location>
</feature>
<feature type="topological domain" description="Extracellular" evidence="2">
    <location>
        <begin position="1"/>
        <end position="37"/>
    </location>
</feature>
<feature type="transmembrane region" description="Helical; Name=1" evidence="2">
    <location>
        <begin position="38"/>
        <end position="63"/>
    </location>
</feature>
<feature type="topological domain" description="Cytoplasmic" evidence="2">
    <location>
        <begin position="64"/>
        <end position="75"/>
    </location>
</feature>
<feature type="transmembrane region" description="Helical; Name=2" evidence="2">
    <location>
        <begin position="76"/>
        <end position="100"/>
    </location>
</feature>
<feature type="topological domain" description="Extracellular" evidence="2">
    <location>
        <begin position="101"/>
        <end position="118"/>
    </location>
</feature>
<feature type="transmembrane region" description="Helical; Name=3" evidence="2">
    <location>
        <begin position="119"/>
        <end position="140"/>
    </location>
</feature>
<feature type="topological domain" description="Cytoplasmic" evidence="2">
    <location>
        <begin position="141"/>
        <end position="160"/>
    </location>
</feature>
<feature type="transmembrane region" description="Helical; Name=4" evidence="2">
    <location>
        <begin position="161"/>
        <end position="181"/>
    </location>
</feature>
<feature type="topological domain" description="Extracellular" evidence="2">
    <location>
        <begin position="182"/>
        <end position="186"/>
    </location>
</feature>
<feature type="transmembrane region" description="Helical; Name=5" evidence="2">
    <location>
        <begin position="187"/>
        <end position="210"/>
    </location>
</feature>
<feature type="topological domain" description="Cytoplasmic" evidence="2">
    <location>
        <begin position="211"/>
        <end position="245"/>
    </location>
</feature>
<feature type="transmembrane region" description="Helical; Name=6" evidence="2">
    <location>
        <begin position="246"/>
        <end position="268"/>
    </location>
</feature>
<feature type="topological domain" description="Extracellular" evidence="2">
    <location>
        <begin position="269"/>
        <end position="277"/>
    </location>
</feature>
<feature type="transmembrane region" description="Helical; Name=7" evidence="2">
    <location>
        <begin position="278"/>
        <end position="301"/>
    </location>
</feature>
<feature type="topological domain" description="Cytoplasmic" evidence="2">
    <location>
        <begin position="302"/>
        <end position="323"/>
    </location>
</feature>
<feature type="lipid moiety-binding region" description="S-palmitoyl cysteine" evidence="2">
    <location>
        <position position="315"/>
    </location>
</feature>
<feature type="glycosylation site" description="N-linked (GlcNAc...) asparagine" evidence="2">
    <location>
        <position position="2"/>
    </location>
</feature>
<feature type="glycosylation site" description="N-linked (GlcNAc...) asparagine" evidence="2">
    <location>
        <position position="16"/>
    </location>
</feature>
<feature type="glycosylation site" description="N-linked (GlcNAc...) asparagine" evidence="2">
    <location>
        <position position="28"/>
    </location>
</feature>
<feature type="sequence variant" id="VAR_020070" description="Have ligand binding and signaling properties similar to wild-type; dbSNP:rs3827103." evidence="5 7">
    <original>V</original>
    <variation>I</variation>
    <location>
        <position position="44"/>
    </location>
</feature>
<feature type="sequence variant" id="VAR_055000" description="Risk factor for obesity; completely lacks signaling in response to agonist stimulation; coexpression of the wild-type and the mutant receptor shows that it does not exert dominant-negative activity on wild-type; dbSNP:rs74315393." evidence="4 5">
    <original>I</original>
    <variation>N</variation>
    <location>
        <position position="146"/>
    </location>
</feature>
<feature type="sequence variant" id="VAR_055001" description="Risk factor for obesity; in vitro expression studies demonstrate that the mutation causes complete loss of function; transfected cells show diffuse cytoplasmic staining indicating intracellular retention of the receptor; dbSNP:rs121913556." evidence="6">
    <original>I</original>
    <variation>S</variation>
    <location>
        <position position="298"/>
    </location>
</feature>
<feature type="helix" evidence="9">
    <location>
        <begin position="42"/>
        <end position="64"/>
    </location>
</feature>
<feature type="helix" evidence="9">
    <location>
        <begin position="72"/>
        <end position="102"/>
    </location>
</feature>
<feature type="strand" evidence="9">
    <location>
        <begin position="103"/>
        <end position="106"/>
    </location>
</feature>
<feature type="helix" evidence="9">
    <location>
        <begin position="110"/>
        <end position="147"/>
    </location>
</feature>
<feature type="helix" evidence="9">
    <location>
        <begin position="152"/>
        <end position="154"/>
    </location>
</feature>
<feature type="helix" evidence="9">
    <location>
        <begin position="158"/>
        <end position="181"/>
    </location>
</feature>
<feature type="turn" evidence="9">
    <location>
        <begin position="182"/>
        <end position="184"/>
    </location>
</feature>
<feature type="helix" evidence="9">
    <location>
        <begin position="186"/>
        <end position="222"/>
    </location>
</feature>
<feature type="helix" evidence="9">
    <location>
        <begin position="236"/>
        <end position="267"/>
    </location>
</feature>
<feature type="strand" evidence="9">
    <location>
        <begin position="269"/>
        <end position="271"/>
    </location>
</feature>
<feature type="helix" evidence="9">
    <location>
        <begin position="272"/>
        <end position="278"/>
    </location>
</feature>
<feature type="helix" evidence="9">
    <location>
        <begin position="281"/>
        <end position="298"/>
    </location>
</feature>
<feature type="strand" evidence="9">
    <location>
        <begin position="299"/>
        <end position="303"/>
    </location>
</feature>
<feature type="helix" evidence="9">
    <location>
        <begin position="304"/>
        <end position="312"/>
    </location>
</feature>
<name>MC3R_HUMAN</name>
<proteinExistence type="evidence at protein level"/>
<accession>P41968</accession>
<accession>Q4KN27</accession>
<accession>Q9H517</accession>
<protein>
    <recommendedName>
        <fullName>Melanocortin receptor 3</fullName>
        <shortName>MC3-R</shortName>
    </recommendedName>
</protein>